<name>PEPT_ECOLC</name>
<organism>
    <name type="scientific">Escherichia coli (strain ATCC 8739 / DSM 1576 / NBRC 3972 / NCIMB 8545 / WDCM 00012 / Crooks)</name>
    <dbReference type="NCBI Taxonomy" id="481805"/>
    <lineage>
        <taxon>Bacteria</taxon>
        <taxon>Pseudomonadati</taxon>
        <taxon>Pseudomonadota</taxon>
        <taxon>Gammaproteobacteria</taxon>
        <taxon>Enterobacterales</taxon>
        <taxon>Enterobacteriaceae</taxon>
        <taxon>Escherichia</taxon>
    </lineage>
</organism>
<reference key="1">
    <citation type="submission" date="2008-02" db="EMBL/GenBank/DDBJ databases">
        <title>Complete sequence of Escherichia coli C str. ATCC 8739.</title>
        <authorList>
            <person name="Copeland A."/>
            <person name="Lucas S."/>
            <person name="Lapidus A."/>
            <person name="Glavina del Rio T."/>
            <person name="Dalin E."/>
            <person name="Tice H."/>
            <person name="Bruce D."/>
            <person name="Goodwin L."/>
            <person name="Pitluck S."/>
            <person name="Kiss H."/>
            <person name="Brettin T."/>
            <person name="Detter J.C."/>
            <person name="Han C."/>
            <person name="Kuske C.R."/>
            <person name="Schmutz J."/>
            <person name="Larimer F."/>
            <person name="Land M."/>
            <person name="Hauser L."/>
            <person name="Kyrpides N."/>
            <person name="Mikhailova N."/>
            <person name="Ingram L."/>
            <person name="Richardson P."/>
        </authorList>
    </citation>
    <scope>NUCLEOTIDE SEQUENCE [LARGE SCALE GENOMIC DNA]</scope>
    <source>
        <strain>ATCC 8739 / DSM 1576 / NBRC 3972 / NCIMB 8545 / WDCM 00012 / Crooks</strain>
    </source>
</reference>
<protein>
    <recommendedName>
        <fullName evidence="1">Peptidase T</fullName>
        <ecNumber evidence="1">3.4.11.4</ecNumber>
    </recommendedName>
    <alternativeName>
        <fullName evidence="1">Aminotripeptidase</fullName>
        <shortName evidence="1">Tripeptidase</shortName>
    </alternativeName>
    <alternativeName>
        <fullName evidence="1">Tripeptide aminopeptidase</fullName>
    </alternativeName>
</protein>
<keyword id="KW-0031">Aminopeptidase</keyword>
<keyword id="KW-0963">Cytoplasm</keyword>
<keyword id="KW-0378">Hydrolase</keyword>
<keyword id="KW-0479">Metal-binding</keyword>
<keyword id="KW-0482">Metalloprotease</keyword>
<keyword id="KW-0645">Protease</keyword>
<keyword id="KW-0862">Zinc</keyword>
<dbReference type="EC" id="3.4.11.4" evidence="1"/>
<dbReference type="EMBL" id="CP000946">
    <property type="protein sequence ID" value="ACA78107.1"/>
    <property type="molecule type" value="Genomic_DNA"/>
</dbReference>
<dbReference type="RefSeq" id="WP_000359441.1">
    <property type="nucleotide sequence ID" value="NZ_MTFT01000032.1"/>
</dbReference>
<dbReference type="SMR" id="B1IUE0"/>
<dbReference type="MEROPS" id="M20.003"/>
<dbReference type="KEGG" id="ecl:EcolC_2476"/>
<dbReference type="HOGENOM" id="CLU_053676_0_0_6"/>
<dbReference type="GO" id="GO:0005829">
    <property type="term" value="C:cytosol"/>
    <property type="evidence" value="ECO:0007669"/>
    <property type="project" value="TreeGrafter"/>
</dbReference>
<dbReference type="GO" id="GO:0008237">
    <property type="term" value="F:metallopeptidase activity"/>
    <property type="evidence" value="ECO:0007669"/>
    <property type="project" value="UniProtKB-KW"/>
</dbReference>
<dbReference type="GO" id="GO:0045148">
    <property type="term" value="F:tripeptide aminopeptidase activity"/>
    <property type="evidence" value="ECO:0007669"/>
    <property type="project" value="UniProtKB-UniRule"/>
</dbReference>
<dbReference type="GO" id="GO:0008270">
    <property type="term" value="F:zinc ion binding"/>
    <property type="evidence" value="ECO:0007669"/>
    <property type="project" value="UniProtKB-UniRule"/>
</dbReference>
<dbReference type="GO" id="GO:0043171">
    <property type="term" value="P:peptide catabolic process"/>
    <property type="evidence" value="ECO:0007669"/>
    <property type="project" value="UniProtKB-UniRule"/>
</dbReference>
<dbReference type="GO" id="GO:0006508">
    <property type="term" value="P:proteolysis"/>
    <property type="evidence" value="ECO:0007669"/>
    <property type="project" value="UniProtKB-UniRule"/>
</dbReference>
<dbReference type="CDD" id="cd03892">
    <property type="entry name" value="M20_peptT"/>
    <property type="match status" value="1"/>
</dbReference>
<dbReference type="FunFam" id="3.30.70.360:FF:000002">
    <property type="entry name" value="Peptidase T"/>
    <property type="match status" value="1"/>
</dbReference>
<dbReference type="Gene3D" id="3.30.70.360">
    <property type="match status" value="1"/>
</dbReference>
<dbReference type="Gene3D" id="3.40.630.10">
    <property type="entry name" value="Zn peptidases"/>
    <property type="match status" value="1"/>
</dbReference>
<dbReference type="HAMAP" id="MF_00550">
    <property type="entry name" value="Aminopeptidase_M20"/>
    <property type="match status" value="1"/>
</dbReference>
<dbReference type="InterPro" id="IPR001261">
    <property type="entry name" value="ArgE/DapE_CS"/>
</dbReference>
<dbReference type="InterPro" id="IPR036264">
    <property type="entry name" value="Bact_exopeptidase_dim_dom"/>
</dbReference>
<dbReference type="InterPro" id="IPR002933">
    <property type="entry name" value="Peptidase_M20"/>
</dbReference>
<dbReference type="InterPro" id="IPR011650">
    <property type="entry name" value="Peptidase_M20_dimer"/>
</dbReference>
<dbReference type="InterPro" id="IPR010161">
    <property type="entry name" value="Peptidase_M20B"/>
</dbReference>
<dbReference type="NCBIfam" id="TIGR01882">
    <property type="entry name" value="peptidase-T"/>
    <property type="match status" value="1"/>
</dbReference>
<dbReference type="NCBIfam" id="NF003976">
    <property type="entry name" value="PRK05469.1"/>
    <property type="match status" value="1"/>
</dbReference>
<dbReference type="NCBIfam" id="NF009920">
    <property type="entry name" value="PRK13381.1"/>
    <property type="match status" value="1"/>
</dbReference>
<dbReference type="PANTHER" id="PTHR42994">
    <property type="entry name" value="PEPTIDASE T"/>
    <property type="match status" value="1"/>
</dbReference>
<dbReference type="PANTHER" id="PTHR42994:SF1">
    <property type="entry name" value="PEPTIDASE T"/>
    <property type="match status" value="1"/>
</dbReference>
<dbReference type="Pfam" id="PF07687">
    <property type="entry name" value="M20_dimer"/>
    <property type="match status" value="1"/>
</dbReference>
<dbReference type="Pfam" id="PF01546">
    <property type="entry name" value="Peptidase_M20"/>
    <property type="match status" value="1"/>
</dbReference>
<dbReference type="PIRSF" id="PIRSF037215">
    <property type="entry name" value="Peptidase_M20B"/>
    <property type="match status" value="1"/>
</dbReference>
<dbReference type="SUPFAM" id="SSF55031">
    <property type="entry name" value="Bacterial exopeptidase dimerisation domain"/>
    <property type="match status" value="1"/>
</dbReference>
<dbReference type="SUPFAM" id="SSF53187">
    <property type="entry name" value="Zn-dependent exopeptidases"/>
    <property type="match status" value="1"/>
</dbReference>
<dbReference type="PROSITE" id="PS00758">
    <property type="entry name" value="ARGE_DAPE_CPG2_1"/>
    <property type="match status" value="1"/>
</dbReference>
<dbReference type="PROSITE" id="PS00759">
    <property type="entry name" value="ARGE_DAPE_CPG2_2"/>
    <property type="match status" value="1"/>
</dbReference>
<feature type="chain" id="PRO_1000081960" description="Peptidase T">
    <location>
        <begin position="1"/>
        <end position="408"/>
    </location>
</feature>
<feature type="active site" evidence="1">
    <location>
        <position position="80"/>
    </location>
</feature>
<feature type="active site" description="Proton acceptor" evidence="1">
    <location>
        <position position="173"/>
    </location>
</feature>
<feature type="binding site" evidence="1">
    <location>
        <position position="78"/>
    </location>
    <ligand>
        <name>Zn(2+)</name>
        <dbReference type="ChEBI" id="CHEBI:29105"/>
        <label>1</label>
    </ligand>
</feature>
<feature type="binding site" evidence="1">
    <location>
        <position position="140"/>
    </location>
    <ligand>
        <name>Zn(2+)</name>
        <dbReference type="ChEBI" id="CHEBI:29105"/>
        <label>1</label>
    </ligand>
</feature>
<feature type="binding site" evidence="1">
    <location>
        <position position="140"/>
    </location>
    <ligand>
        <name>Zn(2+)</name>
        <dbReference type="ChEBI" id="CHEBI:29105"/>
        <label>2</label>
    </ligand>
</feature>
<feature type="binding site" evidence="1">
    <location>
        <position position="174"/>
    </location>
    <ligand>
        <name>Zn(2+)</name>
        <dbReference type="ChEBI" id="CHEBI:29105"/>
        <label>2</label>
    </ligand>
</feature>
<feature type="binding site" evidence="1">
    <location>
        <position position="196"/>
    </location>
    <ligand>
        <name>Zn(2+)</name>
        <dbReference type="ChEBI" id="CHEBI:29105"/>
        <label>1</label>
    </ligand>
</feature>
<feature type="binding site" evidence="1">
    <location>
        <position position="379"/>
    </location>
    <ligand>
        <name>Zn(2+)</name>
        <dbReference type="ChEBI" id="CHEBI:29105"/>
        <label>2</label>
    </ligand>
</feature>
<comment type="function">
    <text evidence="1">Cleaves the N-terminal amino acid of tripeptides.</text>
</comment>
<comment type="catalytic activity">
    <reaction evidence="1">
        <text>Release of the N-terminal residue from a tripeptide.</text>
        <dbReference type="EC" id="3.4.11.4"/>
    </reaction>
</comment>
<comment type="cofactor">
    <cofactor evidence="1">
        <name>Zn(2+)</name>
        <dbReference type="ChEBI" id="CHEBI:29105"/>
    </cofactor>
    <text evidence="1">Binds 2 Zn(2+) ions per subunit.</text>
</comment>
<comment type="subcellular location">
    <subcellularLocation>
        <location evidence="1">Cytoplasm</location>
    </subcellularLocation>
</comment>
<comment type="similarity">
    <text evidence="1">Belongs to the peptidase M20B family.</text>
</comment>
<proteinExistence type="inferred from homology"/>
<evidence type="ECO:0000255" key="1">
    <source>
        <dbReference type="HAMAP-Rule" id="MF_00550"/>
    </source>
</evidence>
<accession>B1IUE0</accession>
<gene>
    <name evidence="1" type="primary">pepT</name>
    <name type="ordered locus">EcolC_2476</name>
</gene>
<sequence length="408" mass="44895">MDKLLERFLNYVSLDTQSKAGVRQVPSTEGQWKLLHLLKEQLEEMGLINVTLSEKGTLMATLPANVPGDIPAIGFISHVDTSPDCSGKNVNPQIVENYRGGDIALGIGDEVLSPVMFPVLHQLLGQTLITTDGKTLLGADDKAGIAEIMTALAVLQQKNIPHGDIRVAFTPDEEVGKGAKHFDVDAFDARWAYTVDGGGVGELEFENFNAASVNIKIVGNNVHPGTAKGVMVNALSLAARIHAEVPADESPEMTEGYEGFYHLASMKGTVDRADMHYIIRDFDRKQFEARKRKMMEIAKKVGKGLHPDCYIELVIEDSYYNMREKVVEHPHILDIAQQAMRDCDIEPELKPIRGGTDGAQLSFMGLPCPNLFTGGYNYHGKHEFVTLEGMEKAVQVIVRIAELTAQRK</sequence>